<protein>
    <recommendedName>
        <fullName>Vitamin D3 receptor B</fullName>
        <shortName>VDR-B</shortName>
    </recommendedName>
    <alternativeName>
        <fullName>1,25-dihydroxyvitamin D3 receptor B</fullName>
    </alternativeName>
    <alternativeName>
        <fullName>Nuclear receptor subfamily 1 group I member 1-B</fullName>
    </alternativeName>
</protein>
<feature type="chain" id="PRO_0000337879" description="Vitamin D3 receptor B">
    <location>
        <begin position="1"/>
        <end position="422"/>
    </location>
</feature>
<feature type="domain" description="NR LBD" evidence="5">
    <location>
        <begin position="126"/>
        <end position="418"/>
    </location>
</feature>
<feature type="DNA-binding region" description="Nuclear receptor" evidence="4">
    <location>
        <begin position="20"/>
        <end position="95"/>
    </location>
</feature>
<feature type="zinc finger region" description="NR C4-type" evidence="4">
    <location>
        <begin position="23"/>
        <end position="43"/>
    </location>
</feature>
<feature type="zinc finger region" description="NR C4-type" evidence="4">
    <location>
        <begin position="59"/>
        <end position="78"/>
    </location>
</feature>
<feature type="region of interest" description="Hinge" evidence="1">
    <location>
        <begin position="96"/>
        <end position="125"/>
    </location>
</feature>
<feature type="region of interest" description="Disordered" evidence="6">
    <location>
        <begin position="106"/>
        <end position="128"/>
    </location>
</feature>
<feature type="region of interest" description="Disordered" evidence="6">
    <location>
        <begin position="145"/>
        <end position="190"/>
    </location>
</feature>
<feature type="region of interest" description="Interaction with coactivator LXXLL motif" evidence="2">
    <location>
        <begin position="243"/>
        <end position="261"/>
    </location>
</feature>
<feature type="short sequence motif" description="9aaTAD" evidence="1">
    <location>
        <begin position="411"/>
        <end position="419"/>
    </location>
</feature>
<feature type="compositionally biased region" description="Low complexity" evidence="6">
    <location>
        <begin position="163"/>
        <end position="185"/>
    </location>
</feature>
<feature type="binding site" evidence="1">
    <location>
        <position position="23"/>
    </location>
    <ligand>
        <name>Zn(2+)</name>
        <dbReference type="ChEBI" id="CHEBI:29105"/>
        <label>1</label>
    </ligand>
</feature>
<feature type="binding site" evidence="1">
    <location>
        <position position="26"/>
    </location>
    <ligand>
        <name>Zn(2+)</name>
        <dbReference type="ChEBI" id="CHEBI:29105"/>
        <label>1</label>
    </ligand>
</feature>
<feature type="binding site" evidence="1">
    <location>
        <position position="40"/>
    </location>
    <ligand>
        <name>Zn(2+)</name>
        <dbReference type="ChEBI" id="CHEBI:29105"/>
        <label>1</label>
    </ligand>
</feature>
<feature type="binding site" evidence="1">
    <location>
        <position position="43"/>
    </location>
    <ligand>
        <name>Zn(2+)</name>
        <dbReference type="ChEBI" id="CHEBI:29105"/>
        <label>1</label>
    </ligand>
</feature>
<feature type="binding site" evidence="1">
    <location>
        <position position="59"/>
    </location>
    <ligand>
        <name>Zn(2+)</name>
        <dbReference type="ChEBI" id="CHEBI:29105"/>
        <label>2</label>
    </ligand>
</feature>
<feature type="binding site" evidence="1">
    <location>
        <position position="65"/>
    </location>
    <ligand>
        <name>Zn(2+)</name>
        <dbReference type="ChEBI" id="CHEBI:29105"/>
        <label>2</label>
    </ligand>
</feature>
<feature type="binding site" evidence="1">
    <location>
        <position position="75"/>
    </location>
    <ligand>
        <name>Zn(2+)</name>
        <dbReference type="ChEBI" id="CHEBI:29105"/>
        <label>2</label>
    </ligand>
</feature>
<feature type="binding site" evidence="1">
    <location>
        <position position="78"/>
    </location>
    <ligand>
        <name>Zn(2+)</name>
        <dbReference type="ChEBI" id="CHEBI:29105"/>
        <label>2</label>
    </ligand>
</feature>
<feature type="binding site" evidence="3">
    <location>
        <position position="142"/>
    </location>
    <ligand>
        <name>calcitriol</name>
        <dbReference type="ChEBI" id="CHEBI:17823"/>
    </ligand>
</feature>
<feature type="binding site" evidence="3">
    <location>
        <position position="234"/>
    </location>
    <ligand>
        <name>calcitriol</name>
        <dbReference type="ChEBI" id="CHEBI:17823"/>
    </ligand>
</feature>
<feature type="binding site" evidence="3">
    <location>
        <position position="271"/>
    </location>
    <ligand>
        <name>calcitriol</name>
        <dbReference type="ChEBI" id="CHEBI:17823"/>
    </ligand>
</feature>
<feature type="binding site" evidence="3">
    <location>
        <position position="275"/>
    </location>
    <ligand>
        <name>calcitriol</name>
        <dbReference type="ChEBI" id="CHEBI:17823"/>
    </ligand>
</feature>
<feature type="binding site" evidence="3">
    <location>
        <position position="302"/>
    </location>
    <ligand>
        <name>calcitriol</name>
        <dbReference type="ChEBI" id="CHEBI:17823"/>
    </ligand>
</feature>
<feature type="binding site" evidence="3">
    <location>
        <position position="392"/>
    </location>
    <ligand>
        <name>calcitriol</name>
        <dbReference type="ChEBI" id="CHEBI:17823"/>
    </ligand>
</feature>
<proteinExistence type="evidence at transcript level"/>
<keyword id="KW-0963">Cytoplasm</keyword>
<keyword id="KW-0238">DNA-binding</keyword>
<keyword id="KW-0479">Metal-binding</keyword>
<keyword id="KW-0539">Nucleus</keyword>
<keyword id="KW-0675">Receptor</keyword>
<keyword id="KW-1185">Reference proteome</keyword>
<keyword id="KW-0804">Transcription</keyword>
<keyword id="KW-0805">Transcription regulation</keyword>
<keyword id="KW-0862">Zinc</keyword>
<keyword id="KW-0863">Zinc-finger</keyword>
<dbReference type="EMBL" id="EB970525">
    <property type="status" value="NOT_ANNOTATED_CDS"/>
    <property type="molecule type" value="mRNA"/>
</dbReference>
<dbReference type="EMBL" id="DQ017633">
    <property type="protein sequence ID" value="AAY85288.1"/>
    <property type="molecule type" value="mRNA"/>
</dbReference>
<dbReference type="RefSeq" id="NP_001153457.1">
    <property type="nucleotide sequence ID" value="NM_001159985.1"/>
</dbReference>
<dbReference type="RefSeq" id="XP_005166104.1">
    <property type="nucleotide sequence ID" value="XM_005166047.5"/>
</dbReference>
<dbReference type="SMR" id="Q1L673"/>
<dbReference type="FunCoup" id="Q1L673">
    <property type="interactions" value="1288"/>
</dbReference>
<dbReference type="STRING" id="7955.ENSDARP00000125655"/>
<dbReference type="PaxDb" id="7955-ENSDARP00000125655"/>
<dbReference type="Ensembl" id="ENSDART00000104116">
    <property type="protein sequence ID" value="ENSDARP00000094891"/>
    <property type="gene ID" value="ENSDARG00000070721"/>
</dbReference>
<dbReference type="Ensembl" id="ENSDART00000150885">
    <property type="protein sequence ID" value="ENSDARP00000125655"/>
    <property type="gene ID" value="ENSDARG00000070721"/>
</dbReference>
<dbReference type="GeneID" id="564511"/>
<dbReference type="KEGG" id="dre:564511"/>
<dbReference type="AGR" id="ZFIN:ZDB-GENE-080403-10"/>
<dbReference type="CTD" id="564511"/>
<dbReference type="ZFIN" id="ZDB-GENE-080403-10">
    <property type="gene designation" value="vdrb"/>
</dbReference>
<dbReference type="eggNOG" id="KOG3575">
    <property type="taxonomic scope" value="Eukaryota"/>
</dbReference>
<dbReference type="HOGENOM" id="CLU_007368_12_0_1"/>
<dbReference type="InParanoid" id="Q1L673"/>
<dbReference type="OMA" id="RPEHSMQ"/>
<dbReference type="OrthoDB" id="6352325at2759"/>
<dbReference type="PhylomeDB" id="Q1L673"/>
<dbReference type="TreeFam" id="TF316304"/>
<dbReference type="PRO" id="PR:Q1L673"/>
<dbReference type="Proteomes" id="UP000000437">
    <property type="component" value="Alternate scaffold 6"/>
</dbReference>
<dbReference type="Proteomes" id="UP000000437">
    <property type="component" value="Chromosome 6"/>
</dbReference>
<dbReference type="Bgee" id="ENSDARG00000070721">
    <property type="expression patterns" value="Expressed in retina and 20 other cell types or tissues"/>
</dbReference>
<dbReference type="ExpressionAtlas" id="Q1L673">
    <property type="expression patterns" value="baseline"/>
</dbReference>
<dbReference type="GO" id="GO:0005737">
    <property type="term" value="C:cytoplasm"/>
    <property type="evidence" value="ECO:0007669"/>
    <property type="project" value="UniProtKB-SubCell"/>
</dbReference>
<dbReference type="GO" id="GO:0005634">
    <property type="term" value="C:nucleus"/>
    <property type="evidence" value="ECO:0000318"/>
    <property type="project" value="GO_Central"/>
</dbReference>
<dbReference type="GO" id="GO:0004879">
    <property type="term" value="F:nuclear receptor activity"/>
    <property type="evidence" value="ECO:0000314"/>
    <property type="project" value="ZFIN"/>
</dbReference>
<dbReference type="GO" id="GO:0000978">
    <property type="term" value="F:RNA polymerase II cis-regulatory region sequence-specific DNA binding"/>
    <property type="evidence" value="ECO:0000318"/>
    <property type="project" value="GO_Central"/>
</dbReference>
<dbReference type="GO" id="GO:0008270">
    <property type="term" value="F:zinc ion binding"/>
    <property type="evidence" value="ECO:0007669"/>
    <property type="project" value="UniProtKB-KW"/>
</dbReference>
<dbReference type="GO" id="GO:0030154">
    <property type="term" value="P:cell differentiation"/>
    <property type="evidence" value="ECO:0000318"/>
    <property type="project" value="GO_Central"/>
</dbReference>
<dbReference type="GO" id="GO:0048701">
    <property type="term" value="P:embryonic cranial skeleton morphogenesis"/>
    <property type="evidence" value="ECO:0000315"/>
    <property type="project" value="ZFIN"/>
</dbReference>
<dbReference type="GO" id="GO:0003146">
    <property type="term" value="P:heart jogging"/>
    <property type="evidence" value="ECO:0000315"/>
    <property type="project" value="ZFIN"/>
</dbReference>
<dbReference type="GO" id="GO:0001947">
    <property type="term" value="P:heart looping"/>
    <property type="evidence" value="ECO:0000315"/>
    <property type="project" value="ZFIN"/>
</dbReference>
<dbReference type="GO" id="GO:0060119">
    <property type="term" value="P:inner ear receptor cell development"/>
    <property type="evidence" value="ECO:0000315"/>
    <property type="project" value="ZFIN"/>
</dbReference>
<dbReference type="GO" id="GO:0030522">
    <property type="term" value="P:intracellular receptor signaling pathway"/>
    <property type="evidence" value="ECO:0000318"/>
    <property type="project" value="GO_Central"/>
</dbReference>
<dbReference type="GO" id="GO:0000122">
    <property type="term" value="P:negative regulation of transcription by RNA polymerase II"/>
    <property type="evidence" value="ECO:0000318"/>
    <property type="project" value="GO_Central"/>
</dbReference>
<dbReference type="GO" id="GO:0071599">
    <property type="term" value="P:otic vesicle development"/>
    <property type="evidence" value="ECO:0000315"/>
    <property type="project" value="ZFIN"/>
</dbReference>
<dbReference type="GO" id="GO:0045944">
    <property type="term" value="P:positive regulation of transcription by RNA polymerase II"/>
    <property type="evidence" value="ECO:0000318"/>
    <property type="project" value="GO_Central"/>
</dbReference>
<dbReference type="CDD" id="cd06955">
    <property type="entry name" value="NR_DBD_VDR"/>
    <property type="match status" value="1"/>
</dbReference>
<dbReference type="FunFam" id="3.30.50.10:FF:000023">
    <property type="entry name" value="Vitamin D3 receptor"/>
    <property type="match status" value="1"/>
</dbReference>
<dbReference type="FunFam" id="1.10.565.10:FF:000021">
    <property type="entry name" value="Vitamin D3 receptor B"/>
    <property type="match status" value="1"/>
</dbReference>
<dbReference type="Gene3D" id="3.30.50.10">
    <property type="entry name" value="Erythroid Transcription Factor GATA-1, subunit A"/>
    <property type="match status" value="1"/>
</dbReference>
<dbReference type="Gene3D" id="1.10.565.10">
    <property type="entry name" value="Retinoid X Receptor"/>
    <property type="match status" value="1"/>
</dbReference>
<dbReference type="InterPro" id="IPR042153">
    <property type="entry name" value="DBD_VDR"/>
</dbReference>
<dbReference type="InterPro" id="IPR035500">
    <property type="entry name" value="NHR-like_dom_sf"/>
</dbReference>
<dbReference type="InterPro" id="IPR000536">
    <property type="entry name" value="Nucl_hrmn_rcpt_lig-bd"/>
</dbReference>
<dbReference type="InterPro" id="IPR050234">
    <property type="entry name" value="Nuclear_hormone_rcpt_NR1"/>
</dbReference>
<dbReference type="InterPro" id="IPR001723">
    <property type="entry name" value="Nuclear_hrmn_rcpt"/>
</dbReference>
<dbReference type="InterPro" id="IPR000324">
    <property type="entry name" value="VitD_rcpt"/>
</dbReference>
<dbReference type="InterPro" id="IPR001628">
    <property type="entry name" value="Znf_hrmn_rcpt"/>
</dbReference>
<dbReference type="InterPro" id="IPR013088">
    <property type="entry name" value="Znf_NHR/GATA"/>
</dbReference>
<dbReference type="PANTHER" id="PTHR24082">
    <property type="entry name" value="NUCLEAR HORMONE RECEPTOR"/>
    <property type="match status" value="1"/>
</dbReference>
<dbReference type="PANTHER" id="PTHR24082:SF504">
    <property type="entry name" value="VITAMIN D3 RECEPTOR B"/>
    <property type="match status" value="1"/>
</dbReference>
<dbReference type="Pfam" id="PF00104">
    <property type="entry name" value="Hormone_recep"/>
    <property type="match status" value="1"/>
</dbReference>
<dbReference type="Pfam" id="PF00105">
    <property type="entry name" value="zf-C4"/>
    <property type="match status" value="1"/>
</dbReference>
<dbReference type="PRINTS" id="PR00398">
    <property type="entry name" value="STRDHORMONER"/>
</dbReference>
<dbReference type="PRINTS" id="PR00047">
    <property type="entry name" value="STROIDFINGER"/>
</dbReference>
<dbReference type="PRINTS" id="PR00350">
    <property type="entry name" value="VITAMINDR"/>
</dbReference>
<dbReference type="SMART" id="SM00430">
    <property type="entry name" value="HOLI"/>
    <property type="match status" value="1"/>
</dbReference>
<dbReference type="SMART" id="SM00399">
    <property type="entry name" value="ZnF_C4"/>
    <property type="match status" value="1"/>
</dbReference>
<dbReference type="SUPFAM" id="SSF57716">
    <property type="entry name" value="Glucocorticoid receptor-like (DNA-binding domain)"/>
    <property type="match status" value="1"/>
</dbReference>
<dbReference type="SUPFAM" id="SSF48508">
    <property type="entry name" value="Nuclear receptor ligand-binding domain"/>
    <property type="match status" value="1"/>
</dbReference>
<dbReference type="PROSITE" id="PS51843">
    <property type="entry name" value="NR_LBD"/>
    <property type="match status" value="1"/>
</dbReference>
<dbReference type="PROSITE" id="PS00031">
    <property type="entry name" value="NUCLEAR_REC_DBD_1"/>
    <property type="match status" value="1"/>
</dbReference>
<dbReference type="PROSITE" id="PS51030">
    <property type="entry name" value="NUCLEAR_REC_DBD_2"/>
    <property type="match status" value="1"/>
</dbReference>
<name>VDRB_DANRE</name>
<accession>Q1L673</accession>
<organism>
    <name type="scientific">Danio rerio</name>
    <name type="common">Zebrafish</name>
    <name type="synonym">Brachydanio rerio</name>
    <dbReference type="NCBI Taxonomy" id="7955"/>
    <lineage>
        <taxon>Eukaryota</taxon>
        <taxon>Metazoa</taxon>
        <taxon>Chordata</taxon>
        <taxon>Craniata</taxon>
        <taxon>Vertebrata</taxon>
        <taxon>Euteleostomi</taxon>
        <taxon>Actinopterygii</taxon>
        <taxon>Neopterygii</taxon>
        <taxon>Teleostei</taxon>
        <taxon>Ostariophysi</taxon>
        <taxon>Cypriniformes</taxon>
        <taxon>Danionidae</taxon>
        <taxon>Danioninae</taxon>
        <taxon>Danio</taxon>
    </lineage>
</organism>
<sequence length="422" mass="47663">MESAVSTSTQVPDEFDRNVPRICGVCGDKATGFHFNAMTCEGCKGFFRRSMKRKASFTCPFNGSCTITKDNRRHCQACRLKRCLDIGMMKEFILTDEEVQRKKELIQRRKDEEAHREAQKPRLSDEQRNIIDTLVDAHHKTYDDSYSDFSRFRPPVREGPVTRSASRAASLHSLSDASSDSFSHSPESGDRKMNLSNLLMMYQEQGLSSSPDSKEEDGSSLSMLPHLADLVSYSIQKVIGFAKMIPGFRELTAEDQIALLKSSAIEVIMLRSNQSFSLEDMSWSCGGPEFKYCVNDVTKAGHTLELLEPLVKFQVGLKKLNLHEEEHVLLMAICLLSPDRPGVQDHVRVEALQDKVSEVLQAYIRAHHPGGRLLYAKMIQKLADLRSLNEEHSKQYRSLSFQPEHSMQLTPLVLEVFGGQVT</sequence>
<gene>
    <name type="primary">vdrb</name>
    <name type="synonym">nr1i1b</name>
    <name type="ORF">gb:dq017633</name>
</gene>
<evidence type="ECO:0000250" key="1">
    <source>
        <dbReference type="UniProtKB" id="P11473"/>
    </source>
</evidence>
<evidence type="ECO:0000250" key="2">
    <source>
        <dbReference type="UniProtKB" id="P13053"/>
    </source>
</evidence>
<evidence type="ECO:0000250" key="3">
    <source>
        <dbReference type="UniProtKB" id="Q9PTN2"/>
    </source>
</evidence>
<evidence type="ECO:0000255" key="4">
    <source>
        <dbReference type="PROSITE-ProRule" id="PRU00407"/>
    </source>
</evidence>
<evidence type="ECO:0000255" key="5">
    <source>
        <dbReference type="PROSITE-ProRule" id="PRU01189"/>
    </source>
</evidence>
<evidence type="ECO:0000256" key="6">
    <source>
        <dbReference type="SAM" id="MobiDB-lite"/>
    </source>
</evidence>
<evidence type="ECO:0000269" key="7">
    <source>
    </source>
</evidence>
<evidence type="ECO:0000305" key="8"/>
<comment type="function">
    <text evidence="1">Nuclear receptor for calcitriol, the active form of vitamin D3 which mediates the action of this vitamin on cells. Enters the nucleus upon vitamin D3 binding where it forms heterodimers with the retinoid X receptor/RXR. The VDR-RXR heterodimers bind to specific response elements on DNA and activate the transcription of vitamin D3-responsive target genes. Recruited to promoters via its interaction with BAZ1B/WSTF which mediates the interaction with acetylated histones, an essential step for VDR-promoter association. Plays a central role in calcium homeostasis.</text>
</comment>
<comment type="subunit">
    <text evidence="1 3">Homodimer in the absence of bound vitamin D3. Heterodimer with RXRA after vitamin D3 binding (By similarity). Interacts with ncoa1 and possibly other coactivators, leading to a strong increase of transcription of target genes (By similarity).</text>
</comment>
<comment type="subcellular location">
    <subcellularLocation>
        <location evidence="1 4">Nucleus</location>
    </subcellularLocation>
    <subcellularLocation>
        <location evidence="1">Cytoplasm</location>
    </subcellularLocation>
    <text evidence="1">Localizes mainly to the nucleus. Translocated into the nucleus via both ligand-dependent and ligand-independent pathways; ligand-independent nuclear translocation is mediated by IPO4.</text>
</comment>
<comment type="tissue specificity">
    <text evidence="7">Detected in embryo 24 to 48 hours after fertilization, and in intestinal bulb.</text>
</comment>
<comment type="domain">
    <text evidence="1">Composed of three domains: a modulating N-terminal domain, a DNA-binding domain and a C-terminal ligand-binding domain.</text>
</comment>
<comment type="domain">
    <text evidence="1">The 9aaTAD motif is a transactivation domain present in a large number of yeast and animal transcription factors.</text>
</comment>
<comment type="similarity">
    <text evidence="8">Belongs to the nuclear hormone receptor family.</text>
</comment>
<reference key="1">
    <citation type="submission" date="2006-05" db="EMBL/GenBank/DDBJ databases">
        <title>Exelixis Danio rerio EST project.</title>
        <authorList>
            <person name="Chen F."/>
            <person name="Jin Y."/>
            <person name="Zeng K."/>
            <person name="Gnirke A."/>
            <person name="Baille M."/>
            <person name="Cheung L.M."/>
            <person name="Chong A."/>
            <person name="Garrick B."/>
            <person name="Murray L."/>
            <person name="Oliva J."/>
            <person name="Park C."/>
            <person name="Reyes J."/>
            <person name="Yang J."/>
            <person name="Amundsen C."/>
            <person name="Orton A."/>
            <person name="Shao A."/>
            <person name="Platt D."/>
            <person name="Swimmer C."/>
        </authorList>
    </citation>
    <scope>NUCLEOTIDE SEQUENCE [LARGE SCALE MRNA] OF 1-97</scope>
    <source>
        <tissue>Testis</tissue>
    </source>
</reference>
<reference key="2">
    <citation type="journal article" date="2007" name="PLoS Genet.">
        <title>Unexpected novel relational links uncovered by extensive developmental profiling of nuclear receptor expression.</title>
        <authorList>
            <person name="Bertrand S."/>
            <person name="Thisse B."/>
            <person name="Tavares R."/>
            <person name="Sachs L."/>
            <person name="Chaumot A."/>
            <person name="Bardet P.-L."/>
            <person name="Escriva H."/>
            <person name="Duffraisse M."/>
            <person name="Marchand O."/>
            <person name="Safi R."/>
            <person name="Thisse C."/>
            <person name="Laudet V."/>
        </authorList>
    </citation>
    <scope>NUCLEOTIDE SEQUENCE [MRNA] OF 4-422</scope>
    <scope>TISSUE SPECIFICITY</scope>
</reference>